<accession>B8J872</accession>
<gene>
    <name evidence="1" type="primary">rplE</name>
    <name type="ordered locus">A2cp1_2030</name>
</gene>
<evidence type="ECO:0000255" key="1">
    <source>
        <dbReference type="HAMAP-Rule" id="MF_01333"/>
    </source>
</evidence>
<evidence type="ECO:0000305" key="2"/>
<comment type="function">
    <text evidence="1">This is one of the proteins that bind and probably mediate the attachment of the 5S RNA into the large ribosomal subunit, where it forms part of the central protuberance. In the 70S ribosome it contacts protein S13 of the 30S subunit (bridge B1b), connecting the 2 subunits; this bridge is implicated in subunit movement. Contacts the P site tRNA; the 5S rRNA and some of its associated proteins might help stabilize positioning of ribosome-bound tRNAs.</text>
</comment>
<comment type="subunit">
    <text evidence="1">Part of the 50S ribosomal subunit; part of the 5S rRNA/L5/L18/L25 subcomplex. Contacts the 5S rRNA and the P site tRNA. Forms a bridge to the 30S subunit in the 70S ribosome.</text>
</comment>
<comment type="similarity">
    <text evidence="1">Belongs to the universal ribosomal protein uL5 family.</text>
</comment>
<reference key="1">
    <citation type="submission" date="2009-01" db="EMBL/GenBank/DDBJ databases">
        <title>Complete sequence of Anaeromyxobacter dehalogenans 2CP-1.</title>
        <authorList>
            <person name="Lucas S."/>
            <person name="Copeland A."/>
            <person name="Lapidus A."/>
            <person name="Glavina del Rio T."/>
            <person name="Dalin E."/>
            <person name="Tice H."/>
            <person name="Bruce D."/>
            <person name="Goodwin L."/>
            <person name="Pitluck S."/>
            <person name="Saunders E."/>
            <person name="Brettin T."/>
            <person name="Detter J.C."/>
            <person name="Han C."/>
            <person name="Larimer F."/>
            <person name="Land M."/>
            <person name="Hauser L."/>
            <person name="Kyrpides N."/>
            <person name="Ovchinnikova G."/>
            <person name="Beliaev A.S."/>
            <person name="Richardson P."/>
        </authorList>
    </citation>
    <scope>NUCLEOTIDE SEQUENCE [LARGE SCALE GENOMIC DNA]</scope>
    <source>
        <strain>2CP-1 / ATCC BAA-258</strain>
    </source>
</reference>
<dbReference type="EMBL" id="CP001359">
    <property type="protein sequence ID" value="ACL65371.1"/>
    <property type="molecule type" value="Genomic_DNA"/>
</dbReference>
<dbReference type="RefSeq" id="WP_011420988.1">
    <property type="nucleotide sequence ID" value="NC_011891.1"/>
</dbReference>
<dbReference type="SMR" id="B8J872"/>
<dbReference type="KEGG" id="acp:A2cp1_2030"/>
<dbReference type="HOGENOM" id="CLU_061015_2_1_7"/>
<dbReference type="Proteomes" id="UP000007089">
    <property type="component" value="Chromosome"/>
</dbReference>
<dbReference type="GO" id="GO:1990904">
    <property type="term" value="C:ribonucleoprotein complex"/>
    <property type="evidence" value="ECO:0007669"/>
    <property type="project" value="UniProtKB-KW"/>
</dbReference>
<dbReference type="GO" id="GO:0005840">
    <property type="term" value="C:ribosome"/>
    <property type="evidence" value="ECO:0007669"/>
    <property type="project" value="UniProtKB-KW"/>
</dbReference>
<dbReference type="GO" id="GO:0019843">
    <property type="term" value="F:rRNA binding"/>
    <property type="evidence" value="ECO:0007669"/>
    <property type="project" value="UniProtKB-UniRule"/>
</dbReference>
<dbReference type="GO" id="GO:0003735">
    <property type="term" value="F:structural constituent of ribosome"/>
    <property type="evidence" value="ECO:0007669"/>
    <property type="project" value="InterPro"/>
</dbReference>
<dbReference type="GO" id="GO:0000049">
    <property type="term" value="F:tRNA binding"/>
    <property type="evidence" value="ECO:0007669"/>
    <property type="project" value="UniProtKB-UniRule"/>
</dbReference>
<dbReference type="GO" id="GO:0006412">
    <property type="term" value="P:translation"/>
    <property type="evidence" value="ECO:0007669"/>
    <property type="project" value="UniProtKB-UniRule"/>
</dbReference>
<dbReference type="FunFam" id="3.30.1440.10:FF:000001">
    <property type="entry name" value="50S ribosomal protein L5"/>
    <property type="match status" value="1"/>
</dbReference>
<dbReference type="Gene3D" id="3.30.1440.10">
    <property type="match status" value="1"/>
</dbReference>
<dbReference type="HAMAP" id="MF_01333_B">
    <property type="entry name" value="Ribosomal_uL5_B"/>
    <property type="match status" value="1"/>
</dbReference>
<dbReference type="InterPro" id="IPR002132">
    <property type="entry name" value="Ribosomal_uL5"/>
</dbReference>
<dbReference type="InterPro" id="IPR020930">
    <property type="entry name" value="Ribosomal_uL5_bac-type"/>
</dbReference>
<dbReference type="InterPro" id="IPR031309">
    <property type="entry name" value="Ribosomal_uL5_C"/>
</dbReference>
<dbReference type="InterPro" id="IPR020929">
    <property type="entry name" value="Ribosomal_uL5_CS"/>
</dbReference>
<dbReference type="InterPro" id="IPR022803">
    <property type="entry name" value="Ribosomal_uL5_dom_sf"/>
</dbReference>
<dbReference type="InterPro" id="IPR031310">
    <property type="entry name" value="Ribosomal_uL5_N"/>
</dbReference>
<dbReference type="NCBIfam" id="NF000585">
    <property type="entry name" value="PRK00010.1"/>
    <property type="match status" value="1"/>
</dbReference>
<dbReference type="PANTHER" id="PTHR11994">
    <property type="entry name" value="60S RIBOSOMAL PROTEIN L11-RELATED"/>
    <property type="match status" value="1"/>
</dbReference>
<dbReference type="Pfam" id="PF00281">
    <property type="entry name" value="Ribosomal_L5"/>
    <property type="match status" value="1"/>
</dbReference>
<dbReference type="Pfam" id="PF00673">
    <property type="entry name" value="Ribosomal_L5_C"/>
    <property type="match status" value="1"/>
</dbReference>
<dbReference type="PIRSF" id="PIRSF002161">
    <property type="entry name" value="Ribosomal_L5"/>
    <property type="match status" value="1"/>
</dbReference>
<dbReference type="SUPFAM" id="SSF55282">
    <property type="entry name" value="RL5-like"/>
    <property type="match status" value="1"/>
</dbReference>
<dbReference type="PROSITE" id="PS00358">
    <property type="entry name" value="RIBOSOMAL_L5"/>
    <property type="match status" value="1"/>
</dbReference>
<organism>
    <name type="scientific">Anaeromyxobacter dehalogenans (strain 2CP-1 / ATCC BAA-258)</name>
    <dbReference type="NCBI Taxonomy" id="455488"/>
    <lineage>
        <taxon>Bacteria</taxon>
        <taxon>Pseudomonadati</taxon>
        <taxon>Myxococcota</taxon>
        <taxon>Myxococcia</taxon>
        <taxon>Myxococcales</taxon>
        <taxon>Cystobacterineae</taxon>
        <taxon>Anaeromyxobacteraceae</taxon>
        <taxon>Anaeromyxobacter</taxon>
    </lineage>
</organism>
<proteinExistence type="inferred from homology"/>
<protein>
    <recommendedName>
        <fullName evidence="1">Large ribosomal subunit protein uL5</fullName>
    </recommendedName>
    <alternativeName>
        <fullName evidence="2">50S ribosomal protein L5</fullName>
    </alternativeName>
</protein>
<feature type="chain" id="PRO_1000166103" description="Large ribosomal subunit protein uL5">
    <location>
        <begin position="1"/>
        <end position="180"/>
    </location>
</feature>
<keyword id="KW-0687">Ribonucleoprotein</keyword>
<keyword id="KW-0689">Ribosomal protein</keyword>
<keyword id="KW-0694">RNA-binding</keyword>
<keyword id="KW-0699">rRNA-binding</keyword>
<keyword id="KW-0820">tRNA-binding</keyword>
<sequence length="180" mass="20262">MAARLKERYDKQLRAELMKELGFANPMQAPRLEKIVVNMGLGEAINNGKIIDASVEQLAAITGQKPVVTRARKSIANFKLRQGQSIGAMVTLRGDRMYEFFDRLVSIALPRVRDFKGVSPKAFDGKGNYTLGVREQIIFPEINYDKVEKIKGLNITVVTTARNDEEGRALLRHLGMPFRQ</sequence>
<name>RL5_ANAD2</name>